<evidence type="ECO:0000250" key="1">
    <source>
        <dbReference type="UniProtKB" id="A6NLX4"/>
    </source>
</evidence>
<evidence type="ECO:0000255" key="2"/>
<evidence type="ECO:0000256" key="3">
    <source>
        <dbReference type="SAM" id="MobiDB-lite"/>
    </source>
</evidence>
<evidence type="ECO:0000305" key="4"/>
<organism>
    <name type="scientific">Mus musculus</name>
    <name type="common">Mouse</name>
    <dbReference type="NCBI Taxonomy" id="10090"/>
    <lineage>
        <taxon>Eukaryota</taxon>
        <taxon>Metazoa</taxon>
        <taxon>Chordata</taxon>
        <taxon>Craniata</taxon>
        <taxon>Vertebrata</taxon>
        <taxon>Euteleostomi</taxon>
        <taxon>Mammalia</taxon>
        <taxon>Eutheria</taxon>
        <taxon>Euarchontoglires</taxon>
        <taxon>Glires</taxon>
        <taxon>Rodentia</taxon>
        <taxon>Myomorpha</taxon>
        <taxon>Muroidea</taxon>
        <taxon>Muridae</taxon>
        <taxon>Murinae</taxon>
        <taxon>Mus</taxon>
        <taxon>Mus</taxon>
    </lineage>
</organism>
<reference key="1">
    <citation type="journal article" date="2005" name="Science">
        <title>The transcriptional landscape of the mammalian genome.</title>
        <authorList>
            <person name="Carninci P."/>
            <person name="Kasukawa T."/>
            <person name="Katayama S."/>
            <person name="Gough J."/>
            <person name="Frith M.C."/>
            <person name="Maeda N."/>
            <person name="Oyama R."/>
            <person name="Ravasi T."/>
            <person name="Lenhard B."/>
            <person name="Wells C."/>
            <person name="Kodzius R."/>
            <person name="Shimokawa K."/>
            <person name="Bajic V.B."/>
            <person name="Brenner S.E."/>
            <person name="Batalov S."/>
            <person name="Forrest A.R."/>
            <person name="Zavolan M."/>
            <person name="Davis M.J."/>
            <person name="Wilming L.G."/>
            <person name="Aidinis V."/>
            <person name="Allen J.E."/>
            <person name="Ambesi-Impiombato A."/>
            <person name="Apweiler R."/>
            <person name="Aturaliya R.N."/>
            <person name="Bailey T.L."/>
            <person name="Bansal M."/>
            <person name="Baxter L."/>
            <person name="Beisel K.W."/>
            <person name="Bersano T."/>
            <person name="Bono H."/>
            <person name="Chalk A.M."/>
            <person name="Chiu K.P."/>
            <person name="Choudhary V."/>
            <person name="Christoffels A."/>
            <person name="Clutterbuck D.R."/>
            <person name="Crowe M.L."/>
            <person name="Dalla E."/>
            <person name="Dalrymple B.P."/>
            <person name="de Bono B."/>
            <person name="Della Gatta G."/>
            <person name="di Bernardo D."/>
            <person name="Down T."/>
            <person name="Engstrom P."/>
            <person name="Fagiolini M."/>
            <person name="Faulkner G."/>
            <person name="Fletcher C.F."/>
            <person name="Fukushima T."/>
            <person name="Furuno M."/>
            <person name="Futaki S."/>
            <person name="Gariboldi M."/>
            <person name="Georgii-Hemming P."/>
            <person name="Gingeras T.R."/>
            <person name="Gojobori T."/>
            <person name="Green R.E."/>
            <person name="Gustincich S."/>
            <person name="Harbers M."/>
            <person name="Hayashi Y."/>
            <person name="Hensch T.K."/>
            <person name="Hirokawa N."/>
            <person name="Hill D."/>
            <person name="Huminiecki L."/>
            <person name="Iacono M."/>
            <person name="Ikeo K."/>
            <person name="Iwama A."/>
            <person name="Ishikawa T."/>
            <person name="Jakt M."/>
            <person name="Kanapin A."/>
            <person name="Katoh M."/>
            <person name="Kawasawa Y."/>
            <person name="Kelso J."/>
            <person name="Kitamura H."/>
            <person name="Kitano H."/>
            <person name="Kollias G."/>
            <person name="Krishnan S.P."/>
            <person name="Kruger A."/>
            <person name="Kummerfeld S.K."/>
            <person name="Kurochkin I.V."/>
            <person name="Lareau L.F."/>
            <person name="Lazarevic D."/>
            <person name="Lipovich L."/>
            <person name="Liu J."/>
            <person name="Liuni S."/>
            <person name="McWilliam S."/>
            <person name="Madan Babu M."/>
            <person name="Madera M."/>
            <person name="Marchionni L."/>
            <person name="Matsuda H."/>
            <person name="Matsuzawa S."/>
            <person name="Miki H."/>
            <person name="Mignone F."/>
            <person name="Miyake S."/>
            <person name="Morris K."/>
            <person name="Mottagui-Tabar S."/>
            <person name="Mulder N."/>
            <person name="Nakano N."/>
            <person name="Nakauchi H."/>
            <person name="Ng P."/>
            <person name="Nilsson R."/>
            <person name="Nishiguchi S."/>
            <person name="Nishikawa S."/>
            <person name="Nori F."/>
            <person name="Ohara O."/>
            <person name="Okazaki Y."/>
            <person name="Orlando V."/>
            <person name="Pang K.C."/>
            <person name="Pavan W.J."/>
            <person name="Pavesi G."/>
            <person name="Pesole G."/>
            <person name="Petrovsky N."/>
            <person name="Piazza S."/>
            <person name="Reed J."/>
            <person name="Reid J.F."/>
            <person name="Ring B.Z."/>
            <person name="Ringwald M."/>
            <person name="Rost B."/>
            <person name="Ruan Y."/>
            <person name="Salzberg S.L."/>
            <person name="Sandelin A."/>
            <person name="Schneider C."/>
            <person name="Schoenbach C."/>
            <person name="Sekiguchi K."/>
            <person name="Semple C.A."/>
            <person name="Seno S."/>
            <person name="Sessa L."/>
            <person name="Sheng Y."/>
            <person name="Shibata Y."/>
            <person name="Shimada H."/>
            <person name="Shimada K."/>
            <person name="Silva D."/>
            <person name="Sinclair B."/>
            <person name="Sperling S."/>
            <person name="Stupka E."/>
            <person name="Sugiura K."/>
            <person name="Sultana R."/>
            <person name="Takenaka Y."/>
            <person name="Taki K."/>
            <person name="Tammoja K."/>
            <person name="Tan S.L."/>
            <person name="Tang S."/>
            <person name="Taylor M.S."/>
            <person name="Tegner J."/>
            <person name="Teichmann S.A."/>
            <person name="Ueda H.R."/>
            <person name="van Nimwegen E."/>
            <person name="Verardo R."/>
            <person name="Wei C.L."/>
            <person name="Yagi K."/>
            <person name="Yamanishi H."/>
            <person name="Zabarovsky E."/>
            <person name="Zhu S."/>
            <person name="Zimmer A."/>
            <person name="Hide W."/>
            <person name="Bult C."/>
            <person name="Grimmond S.M."/>
            <person name="Teasdale R.D."/>
            <person name="Liu E.T."/>
            <person name="Brusic V."/>
            <person name="Quackenbush J."/>
            <person name="Wahlestedt C."/>
            <person name="Mattick J.S."/>
            <person name="Hume D.A."/>
            <person name="Kai C."/>
            <person name="Sasaki D."/>
            <person name="Tomaru Y."/>
            <person name="Fukuda S."/>
            <person name="Kanamori-Katayama M."/>
            <person name="Suzuki M."/>
            <person name="Aoki J."/>
            <person name="Arakawa T."/>
            <person name="Iida J."/>
            <person name="Imamura K."/>
            <person name="Itoh M."/>
            <person name="Kato T."/>
            <person name="Kawaji H."/>
            <person name="Kawagashira N."/>
            <person name="Kawashima T."/>
            <person name="Kojima M."/>
            <person name="Kondo S."/>
            <person name="Konno H."/>
            <person name="Nakano K."/>
            <person name="Ninomiya N."/>
            <person name="Nishio T."/>
            <person name="Okada M."/>
            <person name="Plessy C."/>
            <person name="Shibata K."/>
            <person name="Shiraki T."/>
            <person name="Suzuki S."/>
            <person name="Tagami M."/>
            <person name="Waki K."/>
            <person name="Watahiki A."/>
            <person name="Okamura-Oho Y."/>
            <person name="Suzuki H."/>
            <person name="Kawai J."/>
            <person name="Hayashizaki Y."/>
        </authorList>
    </citation>
    <scope>NUCLEOTIDE SEQUENCE [LARGE SCALE MRNA]</scope>
    <source>
        <strain>C57BL/6J</strain>
        <tissue>Testis</tissue>
    </source>
</reference>
<reference key="2">
    <citation type="journal article" date="2009" name="PLoS Biol.">
        <title>Lineage-specific biology revealed by a finished genome assembly of the mouse.</title>
        <authorList>
            <person name="Church D.M."/>
            <person name="Goodstadt L."/>
            <person name="Hillier L.W."/>
            <person name="Zody M.C."/>
            <person name="Goldstein S."/>
            <person name="She X."/>
            <person name="Bult C.J."/>
            <person name="Agarwala R."/>
            <person name="Cherry J.L."/>
            <person name="DiCuccio M."/>
            <person name="Hlavina W."/>
            <person name="Kapustin Y."/>
            <person name="Meric P."/>
            <person name="Maglott D."/>
            <person name="Birtle Z."/>
            <person name="Marques A.C."/>
            <person name="Graves T."/>
            <person name="Zhou S."/>
            <person name="Teague B."/>
            <person name="Potamousis K."/>
            <person name="Churas C."/>
            <person name="Place M."/>
            <person name="Herschleb J."/>
            <person name="Runnheim R."/>
            <person name="Forrest D."/>
            <person name="Amos-Landgraf J."/>
            <person name="Schwartz D.C."/>
            <person name="Cheng Z."/>
            <person name="Lindblad-Toh K."/>
            <person name="Eichler E.E."/>
            <person name="Ponting C.P."/>
        </authorList>
    </citation>
    <scope>NUCLEOTIDE SEQUENCE [LARGE SCALE GENOMIC DNA]</scope>
    <source>
        <strain>C57BL/6J</strain>
    </source>
</reference>
<name>TM210_MOUSE</name>
<sequence>MAPCPQPESCPAGSPLGLICLSLLLIPASAGTYCECSLGLSREALIALIVVLAGVSASCFCALVVVAIGVFRAKGDTCPGHSENRLVGPYGVQEDRIDLHTVHVESHLMDPDLDVSMMPSLDGPGLMTMTAPLEPPPPPPPPPPLPQ</sequence>
<feature type="signal peptide" evidence="2">
    <location>
        <begin position="1"/>
        <end position="31"/>
    </location>
</feature>
<feature type="chain" id="PRO_0000329081" description="Transmembrane protein 210">
    <location>
        <begin position="32"/>
        <end position="147"/>
    </location>
</feature>
<feature type="topological domain" description="Extracellular" evidence="2">
    <location>
        <begin position="32"/>
        <end position="47"/>
    </location>
</feature>
<feature type="transmembrane region" description="Helical" evidence="2">
    <location>
        <begin position="48"/>
        <end position="68"/>
    </location>
</feature>
<feature type="topological domain" description="Cytoplasmic" evidence="2">
    <location>
        <begin position="69"/>
        <end position="147"/>
    </location>
</feature>
<feature type="region of interest" description="Disordered" evidence="3">
    <location>
        <begin position="128"/>
        <end position="147"/>
    </location>
</feature>
<feature type="compositionally biased region" description="Pro residues" evidence="3">
    <location>
        <begin position="133"/>
        <end position="147"/>
    </location>
</feature>
<gene>
    <name type="primary">Tmem210</name>
</gene>
<accession>Q9D2F0</accession>
<comment type="subcellular location">
    <subcellularLocation>
        <location evidence="4">Membrane</location>
        <topology evidence="4">Single-pass type I membrane protein</topology>
    </subcellularLocation>
    <subcellularLocation>
        <location evidence="1">Cytoplasmic vesicle</location>
        <location evidence="1">Secretory vesicle</location>
        <location evidence="1">Acrosome</location>
    </subcellularLocation>
</comment>
<protein>
    <recommendedName>
        <fullName>Transmembrane protein 210</fullName>
    </recommendedName>
</protein>
<keyword id="KW-0968">Cytoplasmic vesicle</keyword>
<keyword id="KW-0472">Membrane</keyword>
<keyword id="KW-1185">Reference proteome</keyword>
<keyword id="KW-0732">Signal</keyword>
<keyword id="KW-0812">Transmembrane</keyword>
<keyword id="KW-1133">Transmembrane helix</keyword>
<proteinExistence type="evidence at transcript level"/>
<dbReference type="EMBL" id="AK019803">
    <property type="protein sequence ID" value="BAB31857.1"/>
    <property type="molecule type" value="mRNA"/>
</dbReference>
<dbReference type="EMBL" id="AL732309">
    <property type="status" value="NOT_ANNOTATED_CDS"/>
    <property type="molecule type" value="Genomic_DNA"/>
</dbReference>
<dbReference type="CCDS" id="CCDS50527.1"/>
<dbReference type="RefSeq" id="NP_084331.1">
    <property type="nucleotide sequence ID" value="NM_030055.2"/>
</dbReference>
<dbReference type="STRING" id="10090.ENSMUSP00000028340"/>
<dbReference type="iPTMnet" id="Q9D2F0"/>
<dbReference type="PhosphoSitePlus" id="Q9D2F0"/>
<dbReference type="SwissPalm" id="Q9D2F0"/>
<dbReference type="PaxDb" id="10090-ENSMUSP00000028340"/>
<dbReference type="ProteomicsDB" id="258919"/>
<dbReference type="Antibodypedia" id="56627">
    <property type="antibodies" value="5 antibodies from 5 providers"/>
</dbReference>
<dbReference type="Ensembl" id="ENSMUST00000028340.4">
    <property type="protein sequence ID" value="ENSMUSP00000028340.4"/>
    <property type="gene ID" value="ENSMUSG00000026963.5"/>
</dbReference>
<dbReference type="GeneID" id="78217"/>
<dbReference type="KEGG" id="mmu:78217"/>
<dbReference type="UCSC" id="uc008irf.2">
    <property type="organism name" value="mouse"/>
</dbReference>
<dbReference type="AGR" id="MGI:1925467"/>
<dbReference type="CTD" id="100505993"/>
<dbReference type="MGI" id="MGI:1925467">
    <property type="gene designation" value="Tmem210"/>
</dbReference>
<dbReference type="VEuPathDB" id="HostDB:ENSMUSG00000026963"/>
<dbReference type="eggNOG" id="ENOG502THU2">
    <property type="taxonomic scope" value="Eukaryota"/>
</dbReference>
<dbReference type="GeneTree" id="ENSGT00390000008939"/>
<dbReference type="HOGENOM" id="CLU_148113_0_0_1"/>
<dbReference type="InParanoid" id="Q9D2F0"/>
<dbReference type="OMA" id="ETCPGHM"/>
<dbReference type="OrthoDB" id="9837148at2759"/>
<dbReference type="PhylomeDB" id="Q9D2F0"/>
<dbReference type="TreeFam" id="TF338189"/>
<dbReference type="BioGRID-ORCS" id="78217">
    <property type="hits" value="1 hit in 76 CRISPR screens"/>
</dbReference>
<dbReference type="ChiTaRS" id="Tmem210">
    <property type="organism name" value="mouse"/>
</dbReference>
<dbReference type="PRO" id="PR:Q9D2F0"/>
<dbReference type="Proteomes" id="UP000000589">
    <property type="component" value="Chromosome 2"/>
</dbReference>
<dbReference type="RNAct" id="Q9D2F0">
    <property type="molecule type" value="protein"/>
</dbReference>
<dbReference type="Bgee" id="ENSMUSG00000026963">
    <property type="expression patterns" value="Expressed in spermatid and 25 other cell types or tissues"/>
</dbReference>
<dbReference type="GO" id="GO:0001669">
    <property type="term" value="C:acrosomal vesicle"/>
    <property type="evidence" value="ECO:0000250"/>
    <property type="project" value="UniProtKB"/>
</dbReference>
<dbReference type="GO" id="GO:0016020">
    <property type="term" value="C:membrane"/>
    <property type="evidence" value="ECO:0007669"/>
    <property type="project" value="UniProtKB-SubCell"/>
</dbReference>
<dbReference type="InterPro" id="IPR028123">
    <property type="entry name" value="TMEM210"/>
</dbReference>
<dbReference type="PANTHER" id="PTHR39234">
    <property type="entry name" value="TRANSMEMBRANE PROTEIN 210"/>
    <property type="match status" value="1"/>
</dbReference>
<dbReference type="PANTHER" id="PTHR39234:SF1">
    <property type="entry name" value="TRANSMEMBRANE PROTEIN 210"/>
    <property type="match status" value="1"/>
</dbReference>
<dbReference type="Pfam" id="PF15195">
    <property type="entry name" value="TMEM210"/>
    <property type="match status" value="1"/>
</dbReference>